<gene>
    <name evidence="1" type="primary">recR</name>
    <name type="ordered locus">APL_0074</name>
</gene>
<protein>
    <recommendedName>
        <fullName evidence="1">Recombination protein RecR</fullName>
    </recommendedName>
</protein>
<dbReference type="EMBL" id="CP000569">
    <property type="protein sequence ID" value="ABN73182.1"/>
    <property type="status" value="ALT_INIT"/>
    <property type="molecule type" value="Genomic_DNA"/>
</dbReference>
<dbReference type="RefSeq" id="WP_005620263.1">
    <property type="nucleotide sequence ID" value="NC_009053.1"/>
</dbReference>
<dbReference type="SMR" id="A3MYE6"/>
<dbReference type="STRING" id="416269.APL_0074"/>
<dbReference type="EnsemblBacteria" id="ABN73182">
    <property type="protein sequence ID" value="ABN73182"/>
    <property type="gene ID" value="APL_0074"/>
</dbReference>
<dbReference type="KEGG" id="apl:APL_0074"/>
<dbReference type="eggNOG" id="COG0353">
    <property type="taxonomic scope" value="Bacteria"/>
</dbReference>
<dbReference type="HOGENOM" id="CLU_060739_1_2_6"/>
<dbReference type="Proteomes" id="UP000001432">
    <property type="component" value="Chromosome"/>
</dbReference>
<dbReference type="GO" id="GO:0003677">
    <property type="term" value="F:DNA binding"/>
    <property type="evidence" value="ECO:0007669"/>
    <property type="project" value="UniProtKB-UniRule"/>
</dbReference>
<dbReference type="GO" id="GO:0008270">
    <property type="term" value="F:zinc ion binding"/>
    <property type="evidence" value="ECO:0007669"/>
    <property type="project" value="UniProtKB-KW"/>
</dbReference>
<dbReference type="GO" id="GO:0006310">
    <property type="term" value="P:DNA recombination"/>
    <property type="evidence" value="ECO:0007669"/>
    <property type="project" value="UniProtKB-UniRule"/>
</dbReference>
<dbReference type="GO" id="GO:0006281">
    <property type="term" value="P:DNA repair"/>
    <property type="evidence" value="ECO:0007669"/>
    <property type="project" value="UniProtKB-UniRule"/>
</dbReference>
<dbReference type="CDD" id="cd01025">
    <property type="entry name" value="TOPRIM_recR"/>
    <property type="match status" value="1"/>
</dbReference>
<dbReference type="FunFam" id="1.10.8.420:FF:000001">
    <property type="entry name" value="Recombination protein RecR"/>
    <property type="match status" value="1"/>
</dbReference>
<dbReference type="FunFam" id="3.40.1360.10:FF:000001">
    <property type="entry name" value="Recombination protein RecR"/>
    <property type="match status" value="1"/>
</dbReference>
<dbReference type="Gene3D" id="3.40.1360.10">
    <property type="match status" value="1"/>
</dbReference>
<dbReference type="Gene3D" id="6.10.250.240">
    <property type="match status" value="1"/>
</dbReference>
<dbReference type="Gene3D" id="1.10.8.420">
    <property type="entry name" value="RecR Domain 1"/>
    <property type="match status" value="1"/>
</dbReference>
<dbReference type="HAMAP" id="MF_00017">
    <property type="entry name" value="RecR"/>
    <property type="match status" value="1"/>
</dbReference>
<dbReference type="InterPro" id="IPR000093">
    <property type="entry name" value="DNA_Rcmb_RecR"/>
</dbReference>
<dbReference type="InterPro" id="IPR023627">
    <property type="entry name" value="Rcmb_RecR"/>
</dbReference>
<dbReference type="InterPro" id="IPR015967">
    <property type="entry name" value="Rcmb_RecR_Znf"/>
</dbReference>
<dbReference type="InterPro" id="IPR006171">
    <property type="entry name" value="TOPRIM_dom"/>
</dbReference>
<dbReference type="InterPro" id="IPR034137">
    <property type="entry name" value="TOPRIM_RecR"/>
</dbReference>
<dbReference type="NCBIfam" id="TIGR00615">
    <property type="entry name" value="recR"/>
    <property type="match status" value="1"/>
</dbReference>
<dbReference type="PANTHER" id="PTHR30446">
    <property type="entry name" value="RECOMBINATION PROTEIN RECR"/>
    <property type="match status" value="1"/>
</dbReference>
<dbReference type="PANTHER" id="PTHR30446:SF0">
    <property type="entry name" value="RECOMBINATION PROTEIN RECR"/>
    <property type="match status" value="1"/>
</dbReference>
<dbReference type="Pfam" id="PF21175">
    <property type="entry name" value="RecR_C"/>
    <property type="match status" value="1"/>
</dbReference>
<dbReference type="Pfam" id="PF21176">
    <property type="entry name" value="RecR_HhH"/>
    <property type="match status" value="1"/>
</dbReference>
<dbReference type="Pfam" id="PF02132">
    <property type="entry name" value="RecR_ZnF"/>
    <property type="match status" value="1"/>
</dbReference>
<dbReference type="Pfam" id="PF13662">
    <property type="entry name" value="Toprim_4"/>
    <property type="match status" value="1"/>
</dbReference>
<dbReference type="SMART" id="SM00493">
    <property type="entry name" value="TOPRIM"/>
    <property type="match status" value="1"/>
</dbReference>
<dbReference type="SUPFAM" id="SSF111304">
    <property type="entry name" value="Recombination protein RecR"/>
    <property type="match status" value="1"/>
</dbReference>
<dbReference type="PROSITE" id="PS01300">
    <property type="entry name" value="RECR"/>
    <property type="match status" value="1"/>
</dbReference>
<dbReference type="PROSITE" id="PS50880">
    <property type="entry name" value="TOPRIM"/>
    <property type="match status" value="1"/>
</dbReference>
<comment type="function">
    <text evidence="1">May play a role in DNA repair. It seems to be involved in an RecBC-independent recombinational process of DNA repair. It may act with RecF and RecO.</text>
</comment>
<comment type="similarity">
    <text evidence="1">Belongs to the RecR family.</text>
</comment>
<comment type="sequence caution" evidence="2">
    <conflict type="erroneous initiation">
        <sequence resource="EMBL-CDS" id="ABN73182"/>
    </conflict>
</comment>
<feature type="chain" id="PRO_0000322855" description="Recombination protein RecR">
    <location>
        <begin position="1"/>
        <end position="201"/>
    </location>
</feature>
<feature type="domain" description="Toprim" evidence="1">
    <location>
        <begin position="81"/>
        <end position="176"/>
    </location>
</feature>
<feature type="zinc finger region" description="C4-type" evidence="1">
    <location>
        <begin position="57"/>
        <end position="72"/>
    </location>
</feature>
<accession>A3MYE6</accession>
<organism>
    <name type="scientific">Actinobacillus pleuropneumoniae serotype 5b (strain L20)</name>
    <dbReference type="NCBI Taxonomy" id="416269"/>
    <lineage>
        <taxon>Bacteria</taxon>
        <taxon>Pseudomonadati</taxon>
        <taxon>Pseudomonadota</taxon>
        <taxon>Gammaproteobacteria</taxon>
        <taxon>Pasteurellales</taxon>
        <taxon>Pasteurellaceae</taxon>
        <taxon>Actinobacillus</taxon>
    </lineage>
</organism>
<reference key="1">
    <citation type="journal article" date="2008" name="J. Bacteriol.">
        <title>The complete genome sequence of Actinobacillus pleuropneumoniae L20 (serotype 5b).</title>
        <authorList>
            <person name="Foote S.J."/>
            <person name="Bosse J.T."/>
            <person name="Bouevitch A.B."/>
            <person name="Langford P.R."/>
            <person name="Young N.M."/>
            <person name="Nash J.H.E."/>
        </authorList>
    </citation>
    <scope>NUCLEOTIDE SEQUENCE [LARGE SCALE GENOMIC DNA]</scope>
    <source>
        <strain>L20</strain>
    </source>
</reference>
<evidence type="ECO:0000255" key="1">
    <source>
        <dbReference type="HAMAP-Rule" id="MF_00017"/>
    </source>
</evidence>
<evidence type="ECO:0000305" key="2"/>
<proteinExistence type="inferred from homology"/>
<keyword id="KW-0227">DNA damage</keyword>
<keyword id="KW-0233">DNA recombination</keyword>
<keyword id="KW-0234">DNA repair</keyword>
<keyword id="KW-0479">Metal-binding</keyword>
<keyword id="KW-1185">Reference proteome</keyword>
<keyword id="KW-0862">Zinc</keyword>
<keyword id="KW-0863">Zinc-finger</keyword>
<sequence length="201" mass="22168">MQISPLLENLMEALRALPGVGPKSAQRMAYHLLQRNRSGGINLSKALNEAMTHIGHCRSCRTFTEEDECNICKNPRRQMSGQLCVVEMPEDIQAIEQTGQFSGRYFVLMGHLSPLDGIGPREIGLDLLQSRLENESFHEVILATNPTIEGDATANYIAEMCRIHNVKVTRIAHGIPVGGSLEMVDGTTLSHSFAGRRDVSL</sequence>
<name>RECR_ACTP2</name>